<reference key="1">
    <citation type="journal article" date="1995" name="Science">
        <title>Whole-genome random sequencing and assembly of Haemophilus influenzae Rd.</title>
        <authorList>
            <person name="Fleischmann R.D."/>
            <person name="Adams M.D."/>
            <person name="White O."/>
            <person name="Clayton R.A."/>
            <person name="Kirkness E.F."/>
            <person name="Kerlavage A.R."/>
            <person name="Bult C.J."/>
            <person name="Tomb J.-F."/>
            <person name="Dougherty B.A."/>
            <person name="Merrick J.M."/>
            <person name="McKenney K."/>
            <person name="Sutton G.G."/>
            <person name="FitzHugh W."/>
            <person name="Fields C.A."/>
            <person name="Gocayne J.D."/>
            <person name="Scott J.D."/>
            <person name="Shirley R."/>
            <person name="Liu L.-I."/>
            <person name="Glodek A."/>
            <person name="Kelley J.M."/>
            <person name="Weidman J.F."/>
            <person name="Phillips C.A."/>
            <person name="Spriggs T."/>
            <person name="Hedblom E."/>
            <person name="Cotton M.D."/>
            <person name="Utterback T.R."/>
            <person name="Hanna M.C."/>
            <person name="Nguyen D.T."/>
            <person name="Saudek D.M."/>
            <person name="Brandon R.C."/>
            <person name="Fine L.D."/>
            <person name="Fritchman J.L."/>
            <person name="Fuhrmann J.L."/>
            <person name="Geoghagen N.S.M."/>
            <person name="Gnehm C.L."/>
            <person name="McDonald L.A."/>
            <person name="Small K.V."/>
            <person name="Fraser C.M."/>
            <person name="Smith H.O."/>
            <person name="Venter J.C."/>
        </authorList>
    </citation>
    <scope>NUCLEOTIDE SEQUENCE [LARGE SCALE GENOMIC DNA]</scope>
    <source>
        <strain>ATCC 51907 / DSM 11121 / KW20 / Rd</strain>
    </source>
</reference>
<reference key="2">
    <citation type="submission" date="1998-05" db="EMBL/GenBank/DDBJ databases">
        <authorList>
            <person name="White O."/>
            <person name="Clayton R.A."/>
            <person name="Kerlavage A.R."/>
            <person name="Fleischmann R.D."/>
            <person name="Peterson J."/>
            <person name="Hickey E."/>
            <person name="Dodson R."/>
            <person name="Gwinn M."/>
        </authorList>
    </citation>
    <scope>IDENTIFICATION</scope>
</reference>
<comment type="subcellular location">
    <subcellularLocation>
        <location evidence="2">Cell membrane</location>
        <topology evidence="2">Multi-pass membrane protein</topology>
    </subcellularLocation>
</comment>
<comment type="similarity">
    <text evidence="2">Belongs to the EamA transporter family.</text>
</comment>
<feature type="chain" id="PRO_0000108192" description="Uncharacterized transporter HI_0976.1">
    <location>
        <begin position="1"/>
        <end position="170"/>
    </location>
</feature>
<feature type="transmembrane region" description="Helical" evidence="1">
    <location>
        <begin position="21"/>
        <end position="41"/>
    </location>
</feature>
<feature type="transmembrane region" description="Helical" evidence="1">
    <location>
        <begin position="55"/>
        <end position="75"/>
    </location>
</feature>
<feature type="transmembrane region" description="Helical" evidence="1">
    <location>
        <begin position="86"/>
        <end position="106"/>
    </location>
</feature>
<feature type="transmembrane region" description="Helical" evidence="1">
    <location>
        <begin position="117"/>
        <end position="137"/>
    </location>
</feature>
<feature type="transmembrane region" description="Helical" evidence="1">
    <location>
        <begin position="143"/>
        <end position="163"/>
    </location>
</feature>
<feature type="domain" description="EamA">
    <location>
        <begin position="35"/>
        <end position="161"/>
    </location>
</feature>
<sequence length="170" mass="17972">MAFIGVAILINGGKNNEGIDNISLFGCLLVLSAGIIFAAVLRWTQRVVAKVSTQAYTSVSIVLGTITTLPFTLLLTENWQISLNSTGIAGLLYLAIGCSWLAYWLWNKGLNSVDANISGVLVALEPLFGILFAVSLLGETLSFSAALGITIIMLATLGSTLLPKLLKKSV</sequence>
<evidence type="ECO:0000255" key="1"/>
<evidence type="ECO:0000305" key="2"/>
<organism>
    <name type="scientific">Haemophilus influenzae (strain ATCC 51907 / DSM 11121 / KW20 / Rd)</name>
    <dbReference type="NCBI Taxonomy" id="71421"/>
    <lineage>
        <taxon>Bacteria</taxon>
        <taxon>Pseudomonadati</taxon>
        <taxon>Pseudomonadota</taxon>
        <taxon>Gammaproteobacteria</taxon>
        <taxon>Pasteurellales</taxon>
        <taxon>Pasteurellaceae</taxon>
        <taxon>Haemophilus</taxon>
    </lineage>
</organism>
<gene>
    <name type="ordered locus">HI_0976.1</name>
</gene>
<name>Y976A_HAEIN</name>
<dbReference type="EMBL" id="L42023">
    <property type="protein sequence ID" value="AAC22636.1"/>
    <property type="molecule type" value="Genomic_DNA"/>
</dbReference>
<dbReference type="SMR" id="O86230"/>
<dbReference type="STRING" id="71421.HI_0976.1"/>
<dbReference type="TCDB" id="2.A.7.3.30">
    <property type="family name" value="the drug/metabolite transporter (dmt) superfamily"/>
</dbReference>
<dbReference type="EnsemblBacteria" id="AAC22636">
    <property type="protein sequence ID" value="AAC22636"/>
    <property type="gene ID" value="HI_0976.1"/>
</dbReference>
<dbReference type="KEGG" id="hin:HI_0976.1"/>
<dbReference type="eggNOG" id="COG0697">
    <property type="taxonomic scope" value="Bacteria"/>
</dbReference>
<dbReference type="HOGENOM" id="CLU_033863_4_1_6"/>
<dbReference type="PhylomeDB" id="O86230"/>
<dbReference type="Proteomes" id="UP000000579">
    <property type="component" value="Chromosome"/>
</dbReference>
<dbReference type="GO" id="GO:0005886">
    <property type="term" value="C:plasma membrane"/>
    <property type="evidence" value="ECO:0007669"/>
    <property type="project" value="UniProtKB-SubCell"/>
</dbReference>
<dbReference type="InterPro" id="IPR050638">
    <property type="entry name" value="AA-Vitamin_Transporters"/>
</dbReference>
<dbReference type="InterPro" id="IPR000620">
    <property type="entry name" value="EamA_dom"/>
</dbReference>
<dbReference type="PANTHER" id="PTHR32322:SF2">
    <property type="entry name" value="EAMA DOMAIN-CONTAINING PROTEIN"/>
    <property type="match status" value="1"/>
</dbReference>
<dbReference type="PANTHER" id="PTHR32322">
    <property type="entry name" value="INNER MEMBRANE TRANSPORTER"/>
    <property type="match status" value="1"/>
</dbReference>
<dbReference type="Pfam" id="PF00892">
    <property type="entry name" value="EamA"/>
    <property type="match status" value="1"/>
</dbReference>
<dbReference type="SUPFAM" id="SSF103481">
    <property type="entry name" value="Multidrug resistance efflux transporter EmrE"/>
    <property type="match status" value="1"/>
</dbReference>
<protein>
    <recommendedName>
        <fullName>Uncharacterized transporter HI_0976.1</fullName>
    </recommendedName>
</protein>
<keyword id="KW-1003">Cell membrane</keyword>
<keyword id="KW-0472">Membrane</keyword>
<keyword id="KW-1185">Reference proteome</keyword>
<keyword id="KW-0812">Transmembrane</keyword>
<keyword id="KW-1133">Transmembrane helix</keyword>
<keyword id="KW-0813">Transport</keyword>
<proteinExistence type="inferred from homology"/>
<accession>O86230</accession>